<sequence>MHHPGPPRFVATGDEVELAPRDPDPTATYTWRLTQAPAQSTVSLGDDPVEHFVPDAPGRYVVRLTAPDGEHDLTVRAFPGTLESSGTHTSGRSGGHSGGVSGGRSGPGRSGSGEYTQAGDGSDGGGGGQPRLTLRPDIEGDEAVVRADCSPHPEGTETAADLAVEFLLDDRDDVDADAVTRDGTALRIPLDALPERARIHAVAVGNHGYSVPDAVEFTRGGDGVETVTSGAGVAARRPYDAPAWAEDSVIYEIYVRTFAGERDESPFDAITDRLDYLDSLGVDAIWLTPVLQNDHAPHGYNITDFFEIASDLGTRADYERFIEAAHDRGFKVLFDLVCNHSARTHPYFESAVEGPDADYREWYEWRSDTEPETYFEWEHIANFNFDHLPVRRHLLDAVAQWADLVDGFRCDMAWAVPNGFWREIHDYCKDRDSEFLLLDETIPYIPDFQAGLFDMHFDSTTYAALRQVGGGGDAEAILGAIEGRAEIGFPEHASFMLYAENHDETRYIVDYGREAAEAAAGALFTLPGAPLLYAGQEFGQRGRRDDLAWDHADETLQSFVSDLASARHDQPALSADADLVRIPYEVRDGPSDRVVAYARTTENDAAVVVLNFGSEPTTVGLPAGTDGTDLVSGEYRGAAGDGDATVTVDSVSVFPADENDLRQ</sequence>
<evidence type="ECO:0000250" key="1">
    <source>
        <dbReference type="UniProtKB" id="Q08751"/>
    </source>
</evidence>
<evidence type="ECO:0000250" key="2">
    <source>
        <dbReference type="UniProtKB" id="Q8A1G3"/>
    </source>
</evidence>
<evidence type="ECO:0000256" key="3">
    <source>
        <dbReference type="SAM" id="MobiDB-lite"/>
    </source>
</evidence>
<evidence type="ECO:0000269" key="4">
    <source>
    </source>
</evidence>
<evidence type="ECO:0000303" key="5">
    <source>
    </source>
</evidence>
<evidence type="ECO:0000312" key="6">
    <source>
        <dbReference type="EMBL" id="BAM75337.1"/>
    </source>
</evidence>
<evidence type="ECO:0000312" key="7">
    <source>
        <dbReference type="EMBL" id="EMA33637.1"/>
    </source>
</evidence>
<feature type="chain" id="PRO_0000434886" description="Alpha-amylase MalA">
    <location>
        <begin position="1"/>
        <end position="663"/>
    </location>
</feature>
<feature type="region of interest" description="Disordered" evidence="3">
    <location>
        <begin position="1"/>
        <end position="28"/>
    </location>
</feature>
<feature type="region of interest" description="Disordered" evidence="3">
    <location>
        <begin position="80"/>
        <end position="135"/>
    </location>
</feature>
<feature type="compositionally biased region" description="Gly residues" evidence="3">
    <location>
        <begin position="92"/>
        <end position="111"/>
    </location>
</feature>
<feature type="active site" description="Nucleophile" evidence="1">
    <location>
        <position position="411"/>
    </location>
</feature>
<feature type="active site" description="Proton donor" evidence="1">
    <location>
        <position position="440"/>
    </location>
</feature>
<feature type="site" description="Transition state stabilizer" evidence="2">
    <location>
        <position position="503"/>
    </location>
</feature>
<proteinExistence type="evidence at protein level"/>
<reference key="1">
    <citation type="journal article" date="2013" name="Biosci. Biotechnol. Biochem.">
        <title>Gene analysis, expression, and characterization of an intracellular alpha-amylase from the extremely halophilic archaeon Haloarcula japonica.</title>
        <authorList>
            <person name="Onodera M."/>
            <person name="Yatsunami R."/>
            <person name="Tsukimura W."/>
            <person name="Fukui T."/>
            <person name="Nakasone K."/>
            <person name="Takashina T."/>
            <person name="Nakamura S."/>
        </authorList>
    </citation>
    <scope>NUCLEOTIDE SEQUENCE [GENOMIC DNA]</scope>
    <scope>PROTEIN SEQUENCE OF 1-12</scope>
    <scope>FUNCTION</scope>
    <scope>CATALYTIC ACTIVITY</scope>
    <scope>ACTIVITY REGULATION</scope>
    <scope>BIOPHYSICOCHEMICAL PROPERTIES</scope>
    <scope>SUBCELLULAR LOCATION</scope>
    <scope>SUBSTRATE SPECIFICITY</scope>
    <source>
        <strain>ATCC 49778 / DSM 6131 / JCM 7785 / NBRC 101032 / NCIMB 13157 / TR-1</strain>
    </source>
</reference>
<reference key="2">
    <citation type="journal article" date="2014" name="PLoS Genet.">
        <title>Phylogenetically driven sequencing of extremely halophilic archaea reveals strategies for static and dynamic osmo-response.</title>
        <authorList>
            <person name="Becker E.A."/>
            <person name="Seitzer P.M."/>
            <person name="Tritt A."/>
            <person name="Larsen D."/>
            <person name="Krusor M."/>
            <person name="Yao A.I."/>
            <person name="Wu D."/>
            <person name="Madern D."/>
            <person name="Eisen J.A."/>
            <person name="Darling A.E."/>
            <person name="Facciotti M.T."/>
        </authorList>
    </citation>
    <scope>NUCLEOTIDE SEQUENCE [LARGE SCALE GENOMIC DNA]</scope>
    <source>
        <strain>ATCC 49778 / DSM 6131 / JCM 7785 / NBRC 101032 / NCIMB 13157 / TR-1</strain>
    </source>
</reference>
<name>MALA_HALJT</name>
<dbReference type="EC" id="3.2.1.1" evidence="4"/>
<dbReference type="EMBL" id="AB743840">
    <property type="protein sequence ID" value="BAM75337.1"/>
    <property type="molecule type" value="Genomic_DNA"/>
</dbReference>
<dbReference type="EMBL" id="AOLY01000007">
    <property type="protein sequence ID" value="EMA33637.1"/>
    <property type="molecule type" value="Genomic_DNA"/>
</dbReference>
<dbReference type="RefSeq" id="WP_004591161.1">
    <property type="nucleotide sequence ID" value="NZ_AOLY01000007.1"/>
</dbReference>
<dbReference type="SMR" id="L8B068"/>
<dbReference type="STRING" id="1227453.C444_04352"/>
<dbReference type="PATRIC" id="fig|1227453.3.peg.875"/>
<dbReference type="eggNOG" id="arCOG02948">
    <property type="taxonomic scope" value="Archaea"/>
</dbReference>
<dbReference type="OrthoDB" id="34423at2157"/>
<dbReference type="BRENDA" id="3.2.1.1">
    <property type="organism ID" value="13658"/>
</dbReference>
<dbReference type="UniPathway" id="UPA00153"/>
<dbReference type="Proteomes" id="UP000011524">
    <property type="component" value="Unassembled WGS sequence"/>
</dbReference>
<dbReference type="GO" id="GO:0005737">
    <property type="term" value="C:cytoplasm"/>
    <property type="evidence" value="ECO:0000314"/>
    <property type="project" value="UniProtKB"/>
</dbReference>
<dbReference type="GO" id="GO:0004558">
    <property type="term" value="F:alpha-1,4-glucosidase activity"/>
    <property type="evidence" value="ECO:0000314"/>
    <property type="project" value="UniProtKB"/>
</dbReference>
<dbReference type="GO" id="GO:0004556">
    <property type="term" value="F:alpha-amylase activity"/>
    <property type="evidence" value="ECO:0000314"/>
    <property type="project" value="UniProtKB"/>
</dbReference>
<dbReference type="GO" id="GO:2000897">
    <property type="term" value="P:amylopectin catabolic process"/>
    <property type="evidence" value="ECO:0000314"/>
    <property type="project" value="UniProtKB"/>
</dbReference>
<dbReference type="GO" id="GO:0016052">
    <property type="term" value="P:carbohydrate catabolic process"/>
    <property type="evidence" value="ECO:0000314"/>
    <property type="project" value="UniProtKB"/>
</dbReference>
<dbReference type="GO" id="GO:0005980">
    <property type="term" value="P:glycogen catabolic process"/>
    <property type="evidence" value="ECO:0000314"/>
    <property type="project" value="UniProtKB"/>
</dbReference>
<dbReference type="GO" id="GO:0005977">
    <property type="term" value="P:glycogen metabolic process"/>
    <property type="evidence" value="ECO:0000314"/>
    <property type="project" value="UniProtKB"/>
</dbReference>
<dbReference type="GO" id="GO:0009313">
    <property type="term" value="P:oligosaccharide catabolic process"/>
    <property type="evidence" value="ECO:0007669"/>
    <property type="project" value="TreeGrafter"/>
</dbReference>
<dbReference type="GO" id="GO:0005983">
    <property type="term" value="P:starch catabolic process"/>
    <property type="evidence" value="ECO:0000314"/>
    <property type="project" value="UniProtKB"/>
</dbReference>
<dbReference type="Gene3D" id="3.20.20.80">
    <property type="entry name" value="Glycosidases"/>
    <property type="match status" value="1"/>
</dbReference>
<dbReference type="Gene3D" id="2.60.40.1180">
    <property type="entry name" value="Golgi alpha-mannosidase II"/>
    <property type="match status" value="1"/>
</dbReference>
<dbReference type="Gene3D" id="2.60.40.10">
    <property type="entry name" value="Immunoglobulins"/>
    <property type="match status" value="1"/>
</dbReference>
<dbReference type="InterPro" id="IPR053556">
    <property type="entry name" value="GH13_alpha-amylase"/>
</dbReference>
<dbReference type="InterPro" id="IPR006047">
    <property type="entry name" value="Glyco_hydro_13_cat_dom"/>
</dbReference>
<dbReference type="InterPro" id="IPR013780">
    <property type="entry name" value="Glyco_hydro_b"/>
</dbReference>
<dbReference type="InterPro" id="IPR017853">
    <property type="entry name" value="Glycoside_hydrolase_SF"/>
</dbReference>
<dbReference type="InterPro" id="IPR013783">
    <property type="entry name" value="Ig-like_fold"/>
</dbReference>
<dbReference type="NCBIfam" id="NF041321">
    <property type="entry name" value="Alpha-amyl_MalA_Halo"/>
    <property type="match status" value="1"/>
</dbReference>
<dbReference type="PANTHER" id="PTHR10357">
    <property type="entry name" value="ALPHA-AMYLASE FAMILY MEMBER"/>
    <property type="match status" value="1"/>
</dbReference>
<dbReference type="PANTHER" id="PTHR10357:SF179">
    <property type="entry name" value="NEUTRAL AND BASIC AMINO ACID TRANSPORT PROTEIN RBAT"/>
    <property type="match status" value="1"/>
</dbReference>
<dbReference type="Pfam" id="PF00128">
    <property type="entry name" value="Alpha-amylase"/>
    <property type="match status" value="2"/>
</dbReference>
<dbReference type="SMART" id="SM00642">
    <property type="entry name" value="Aamy"/>
    <property type="match status" value="1"/>
</dbReference>
<dbReference type="SUPFAM" id="SSF51445">
    <property type="entry name" value="(Trans)glycosidases"/>
    <property type="match status" value="1"/>
</dbReference>
<dbReference type="SUPFAM" id="SSF51011">
    <property type="entry name" value="Glycosyl hydrolase domain"/>
    <property type="match status" value="1"/>
</dbReference>
<comment type="function">
    <text evidence="2 4">Alpha-amylase that cleaves starch into oligosaccharides, the first step in starch degradation (By similarity). Endo-acting enzyme which prefers a linear polysaccharide to branched polysaccharides hydrolyzing alpha-1,4 glucosidic bonds efficiently. Also has transglycosylation activity, but does not act on alpha-1,6 bonds. Higher activities of 100%, 79% and 67.8% against amylose, soluble starch and amylopectin, respectively. Lower activity of 22% against glycogen and faint or no activity against alpha-, beta- and gamma-cyclodextrin.</text>
</comment>
<comment type="catalytic activity">
    <reaction evidence="4">
        <text>Endohydrolysis of (1-&gt;4)-alpha-D-glucosidic linkages in polysaccharides containing three or more (1-&gt;4)-alpha-linked D-glucose units.</text>
        <dbReference type="EC" id="3.2.1.1"/>
    </reaction>
</comment>
<comment type="activity regulation">
    <text evidence="4">Stable and active over a broad range of NaCl concentrations (0.5 to 4.2 M NaCl), with maximal activity at 2.6 M NaCl. 83% and 94% of the maximum activity at 0.6 and 4.2 M NaCl, respectively. Active and stable also in KCl.</text>
</comment>
<comment type="biophysicochemical properties">
    <phDependence>
        <text evidence="4">Optimum pH is 6.5 in 2.0 M NaCl. Stable over a range of pH 5.7-9.2.</text>
    </phDependence>
    <temperatureDependence>
        <text evidence="4">Optimum temperature is 45 degrees Celsius in 2.0 M NaCl and at pH 6.5. Relatively stable up to 55 degrees Celsius.</text>
    </temperatureDependence>
</comment>
<comment type="pathway">
    <text evidence="2">Glycan degradation; starch degradation.</text>
</comment>
<comment type="subcellular location">
    <subcellularLocation>
        <location evidence="4">Cytoplasm</location>
    </subcellularLocation>
</comment>
<comment type="similarity">
    <text evidence="5">Belongs to the glycosyl hydrolase 13 family.</text>
</comment>
<keyword id="KW-0119">Carbohydrate metabolism</keyword>
<keyword id="KW-0963">Cytoplasm</keyword>
<keyword id="KW-0903">Direct protein sequencing</keyword>
<keyword id="KW-0326">Glycosidase</keyword>
<keyword id="KW-0378">Hydrolase</keyword>
<keyword id="KW-0624">Polysaccharide degradation</keyword>
<gene>
    <name evidence="6" type="primary">malA</name>
    <name evidence="7" type="ORF">C444_04352</name>
</gene>
<accession>L8B068</accession>
<accession>M0LJ23</accession>
<organism>
    <name type="scientific">Haloarcula japonica (strain ATCC 49778 / DSM 6131 / JCM 7785 / NBRC 101032 / NCIMB 13157 / TR-1)</name>
    <dbReference type="NCBI Taxonomy" id="1227453"/>
    <lineage>
        <taxon>Archaea</taxon>
        <taxon>Methanobacteriati</taxon>
        <taxon>Methanobacteriota</taxon>
        <taxon>Stenosarchaea group</taxon>
        <taxon>Halobacteria</taxon>
        <taxon>Halobacteriales</taxon>
        <taxon>Haloarculaceae</taxon>
        <taxon>Haloarcula</taxon>
    </lineage>
</organism>
<protein>
    <recommendedName>
        <fullName evidence="5">Alpha-amylase MalA</fullName>
        <ecNumber evidence="4">3.2.1.1</ecNumber>
    </recommendedName>
</protein>